<keyword id="KW-0002">3D-structure</keyword>
<keyword id="KW-0025">Alternative splicing</keyword>
<keyword id="KW-0175">Coiled coil</keyword>
<keyword id="KW-0963">Cytoplasm</keyword>
<keyword id="KW-0479">Metal-binding</keyword>
<keyword id="KW-0597">Phosphoprotein</keyword>
<keyword id="KW-1267">Proteomics identification</keyword>
<keyword id="KW-1185">Reference proteome</keyword>
<keyword id="KW-0677">Repeat</keyword>
<keyword id="KW-0770">Synapse</keyword>
<keyword id="KW-0808">Transferase</keyword>
<keyword id="KW-0832">Ubl conjugation</keyword>
<keyword id="KW-0833">Ubl conjugation pathway</keyword>
<keyword id="KW-0862">Zinc</keyword>
<keyword id="KW-0863">Zinc-finger</keyword>
<accession>Q9UPQ7</accession>
<accession>A7MCZ6</accession>
<accession>Q8N2N7</accession>
<accession>Q96CC2</accession>
<accession>Q9NSQ2</accession>
<gene>
    <name type="primary">PDZRN3</name>
    <name type="synonym">KIAA1095</name>
    <name type="synonym">LNX3</name>
    <name type="synonym">SEMCAP3</name>
</gene>
<feature type="chain" id="PRO_0000055917" description="E3 ubiquitin-protein ligase PDZRN3">
    <location>
        <begin position="1"/>
        <end position="1066"/>
    </location>
</feature>
<feature type="domain" description="PDZ 1" evidence="5">
    <location>
        <begin position="249"/>
        <end position="339"/>
    </location>
</feature>
<feature type="domain" description="PDZ 2" evidence="5">
    <location>
        <begin position="419"/>
        <end position="503"/>
    </location>
</feature>
<feature type="zinc finger region" description="RING-type; degenerate" evidence="6">
    <location>
        <begin position="18"/>
        <end position="56"/>
    </location>
</feature>
<feature type="zinc finger region" description="TRAF-type" evidence="7">
    <location>
        <begin position="100"/>
        <end position="158"/>
    </location>
</feature>
<feature type="region of interest" description="Disordered" evidence="8">
    <location>
        <begin position="545"/>
        <end position="603"/>
    </location>
</feature>
<feature type="region of interest" description="Disordered" evidence="8">
    <location>
        <begin position="744"/>
        <end position="778"/>
    </location>
</feature>
<feature type="region of interest" description="Disordered" evidence="8">
    <location>
        <begin position="808"/>
        <end position="863"/>
    </location>
</feature>
<feature type="coiled-coil region" evidence="4">
    <location>
        <begin position="679"/>
        <end position="704"/>
    </location>
</feature>
<feature type="coiled-coil region" evidence="4">
    <location>
        <begin position="975"/>
        <end position="1025"/>
    </location>
</feature>
<feature type="compositionally biased region" description="Polar residues" evidence="8">
    <location>
        <begin position="554"/>
        <end position="563"/>
    </location>
</feature>
<feature type="compositionally biased region" description="Basic and acidic residues" evidence="8">
    <location>
        <begin position="564"/>
        <end position="582"/>
    </location>
</feature>
<feature type="compositionally biased region" description="Polar residues" evidence="8">
    <location>
        <begin position="594"/>
        <end position="603"/>
    </location>
</feature>
<feature type="compositionally biased region" description="Basic and acidic residues" evidence="8">
    <location>
        <begin position="744"/>
        <end position="754"/>
    </location>
</feature>
<feature type="compositionally biased region" description="Polar residues" evidence="8">
    <location>
        <begin position="755"/>
        <end position="769"/>
    </location>
</feature>
<feature type="compositionally biased region" description="Polar residues" evidence="8">
    <location>
        <begin position="845"/>
        <end position="855"/>
    </location>
</feature>
<feature type="modified residue" description="Phosphoserine" evidence="3">
    <location>
        <position position="427"/>
    </location>
</feature>
<feature type="splice variant" id="VSP_012606" description="In isoform 2." evidence="14">
    <original>VNGRDLSRATHDQAVEAFKTAKEPIVVQVLRRTPRTKMFTPPSESQLVDTGTQT</original>
    <variation>MRKLELRTVKLPKAHSQDSNAGFIPQLLSLHTPPLSCEKGGGHLACGGAYLNCI</variation>
    <location>
        <begin position="307"/>
        <end position="360"/>
    </location>
</feature>
<feature type="splice variant" id="VSP_012607" description="In isoform 2." evidence="14">
    <location>
        <begin position="361"/>
        <end position="1066"/>
    </location>
</feature>
<feature type="splice variant" id="VSP_012608" description="In isoform 3." evidence="13">
    <original>DECERFRELLELKCQVKSATPYGLYYPSGPLDAGKSDPESVDKELELLNEELRSIELECLSIVRAHKMQQLKEQYRESWMLHNSGFRNY</original>
    <variation>EGEDPQRRDALHHQEARAGPPAAGARPEDPGRAQRHDHRRRRGERDEDGALLEQGGEEAAPGEGQGAAAAARVHDAEQVGLSQGAASSR</variation>
    <location>
        <begin position="641"/>
        <end position="729"/>
    </location>
</feature>
<feature type="splice variant" id="VSP_012609" description="In isoform 3." evidence="13">
    <location>
        <begin position="730"/>
        <end position="1066"/>
    </location>
</feature>
<feature type="sequence variant" id="VAR_020965" description="In dbSNP:rs3205537." evidence="12">
    <original>A</original>
    <variation>V</variation>
    <location>
        <position position="783"/>
    </location>
</feature>
<feature type="strand" evidence="16">
    <location>
        <begin position="245"/>
        <end position="252"/>
    </location>
</feature>
<feature type="strand" evidence="16">
    <location>
        <begin position="255"/>
        <end position="257"/>
    </location>
</feature>
<feature type="strand" evidence="16">
    <location>
        <begin position="260"/>
        <end position="264"/>
    </location>
</feature>
<feature type="strand" evidence="16">
    <location>
        <begin position="273"/>
        <end position="276"/>
    </location>
</feature>
<feature type="strand" evidence="16">
    <location>
        <begin position="282"/>
        <end position="286"/>
    </location>
</feature>
<feature type="strand" evidence="16">
    <location>
        <begin position="288"/>
        <end position="290"/>
    </location>
</feature>
<feature type="helix" evidence="16">
    <location>
        <begin position="291"/>
        <end position="294"/>
    </location>
</feature>
<feature type="strand" evidence="16">
    <location>
        <begin position="303"/>
        <end position="307"/>
    </location>
</feature>
<feature type="helix" evidence="16">
    <location>
        <begin position="317"/>
        <end position="326"/>
    </location>
</feature>
<feature type="strand" evidence="16">
    <location>
        <begin position="329"/>
        <end position="337"/>
    </location>
</feature>
<feature type="strand" evidence="17">
    <location>
        <begin position="433"/>
        <end position="436"/>
    </location>
</feature>
<feature type="strand" evidence="17">
    <location>
        <begin position="447"/>
        <end position="452"/>
    </location>
</feature>
<feature type="strand" evidence="17">
    <location>
        <begin position="454"/>
        <end position="456"/>
    </location>
</feature>
<feature type="helix" evidence="17">
    <location>
        <begin position="457"/>
        <end position="460"/>
    </location>
</feature>
<feature type="strand" evidence="17">
    <location>
        <begin position="469"/>
        <end position="475"/>
    </location>
</feature>
<feature type="helix" evidence="17">
    <location>
        <begin position="481"/>
        <end position="488"/>
    </location>
</feature>
<feature type="strand" evidence="17">
    <location>
        <begin position="498"/>
        <end position="502"/>
    </location>
</feature>
<protein>
    <recommendedName>
        <fullName>E3 ubiquitin-protein ligase PDZRN3</fullName>
        <ecNumber>2.3.2.27</ecNumber>
    </recommendedName>
    <alternativeName>
        <fullName>Ligand of Numb protein X 3</fullName>
    </alternativeName>
    <alternativeName>
        <fullName>PDZ domain-containing RING finger protein 3</fullName>
    </alternativeName>
    <alternativeName>
        <fullName evidence="15">RING-type E3 ubiquitin transferase PDZRN3</fullName>
    </alternativeName>
    <alternativeName>
        <fullName>Semaphorin cytoplasmic domain-associated protein 3</fullName>
        <shortName>Protein SEMACAP3</shortName>
    </alternativeName>
</protein>
<dbReference type="EC" id="2.3.2.27"/>
<dbReference type="EMBL" id="AB029018">
    <property type="protein sequence ID" value="BAA83047.1"/>
    <property type="status" value="ALT_INIT"/>
    <property type="molecule type" value="mRNA"/>
</dbReference>
<dbReference type="EMBL" id="BC014432">
    <property type="protein sequence ID" value="AAH14432.1"/>
    <property type="molecule type" value="mRNA"/>
</dbReference>
<dbReference type="EMBL" id="BC152417">
    <property type="protein sequence ID" value="AAI52418.1"/>
    <property type="molecule type" value="mRNA"/>
</dbReference>
<dbReference type="EMBL" id="AK074573">
    <property type="protein sequence ID" value="BAC11068.1"/>
    <property type="status" value="ALT_INIT"/>
    <property type="molecule type" value="mRNA"/>
</dbReference>
<dbReference type="EMBL" id="AL157498">
    <property type="protein sequence ID" value="CAB75679.1"/>
    <property type="molecule type" value="mRNA"/>
</dbReference>
<dbReference type="CCDS" id="CCDS33789.1">
    <molecule id="Q9UPQ7-1"/>
</dbReference>
<dbReference type="PIR" id="T46925">
    <property type="entry name" value="T46925"/>
</dbReference>
<dbReference type="RefSeq" id="NP_001290068.1">
    <property type="nucleotide sequence ID" value="NM_001303139.1"/>
</dbReference>
<dbReference type="RefSeq" id="NP_001290069.1">
    <property type="nucleotide sequence ID" value="NM_001303140.1"/>
</dbReference>
<dbReference type="RefSeq" id="NP_001290070.1">
    <property type="nucleotide sequence ID" value="NM_001303141.1"/>
</dbReference>
<dbReference type="RefSeq" id="NP_001290071.1">
    <property type="nucleotide sequence ID" value="NM_001303142.1"/>
</dbReference>
<dbReference type="RefSeq" id="NP_055824.1">
    <molecule id="Q9UPQ7-1"/>
    <property type="nucleotide sequence ID" value="NM_015009.3"/>
</dbReference>
<dbReference type="PDB" id="1UHP">
    <property type="method" value="NMR"/>
    <property type="chains" value="A=246-339"/>
</dbReference>
<dbReference type="PDB" id="1WH1">
    <property type="method" value="NMR"/>
    <property type="chains" value="A=405-515"/>
</dbReference>
<dbReference type="PDBsum" id="1UHP"/>
<dbReference type="PDBsum" id="1WH1"/>
<dbReference type="BMRB" id="Q9UPQ7"/>
<dbReference type="SMR" id="Q9UPQ7"/>
<dbReference type="BioGRID" id="116664">
    <property type="interactions" value="45"/>
</dbReference>
<dbReference type="FunCoup" id="Q9UPQ7">
    <property type="interactions" value="255"/>
</dbReference>
<dbReference type="IntAct" id="Q9UPQ7">
    <property type="interactions" value="20"/>
</dbReference>
<dbReference type="STRING" id="9606.ENSP00000263666"/>
<dbReference type="GlyGen" id="Q9UPQ7">
    <property type="glycosylation" value="2 sites"/>
</dbReference>
<dbReference type="iPTMnet" id="Q9UPQ7"/>
<dbReference type="PhosphoSitePlus" id="Q9UPQ7"/>
<dbReference type="BioMuta" id="PDZRN3"/>
<dbReference type="DMDM" id="62288903"/>
<dbReference type="jPOST" id="Q9UPQ7"/>
<dbReference type="MassIVE" id="Q9UPQ7"/>
<dbReference type="PaxDb" id="9606-ENSP00000263666"/>
<dbReference type="PeptideAtlas" id="Q9UPQ7"/>
<dbReference type="ProteomicsDB" id="85416">
    <molecule id="Q9UPQ7-1"/>
</dbReference>
<dbReference type="ProteomicsDB" id="85417">
    <molecule id="Q9UPQ7-2"/>
</dbReference>
<dbReference type="ProteomicsDB" id="85418">
    <molecule id="Q9UPQ7-3"/>
</dbReference>
<dbReference type="Pumba" id="Q9UPQ7"/>
<dbReference type="Antibodypedia" id="31945">
    <property type="antibodies" value="100 antibodies from 15 providers"/>
</dbReference>
<dbReference type="DNASU" id="23024"/>
<dbReference type="Ensembl" id="ENST00000263666.9">
    <molecule id="Q9UPQ7-1"/>
    <property type="protein sequence ID" value="ENSP00000263666.4"/>
    <property type="gene ID" value="ENSG00000121440.15"/>
</dbReference>
<dbReference type="Ensembl" id="ENST00000308537.4">
    <molecule id="Q9UPQ7-2"/>
    <property type="protein sequence ID" value="ENSP00000308831.4"/>
    <property type="gene ID" value="ENSG00000121440.15"/>
</dbReference>
<dbReference type="GeneID" id="23024"/>
<dbReference type="KEGG" id="hsa:23024"/>
<dbReference type="MANE-Select" id="ENST00000263666.9">
    <property type="protein sequence ID" value="ENSP00000263666.4"/>
    <property type="RefSeq nucleotide sequence ID" value="NM_015009.3"/>
    <property type="RefSeq protein sequence ID" value="NP_055824.1"/>
</dbReference>
<dbReference type="UCSC" id="uc003dpl.2">
    <molecule id="Q9UPQ7-1"/>
    <property type="organism name" value="human"/>
</dbReference>
<dbReference type="AGR" id="HGNC:17704"/>
<dbReference type="CTD" id="23024"/>
<dbReference type="DisGeNET" id="23024"/>
<dbReference type="GeneCards" id="PDZRN3"/>
<dbReference type="HGNC" id="HGNC:17704">
    <property type="gene designation" value="PDZRN3"/>
</dbReference>
<dbReference type="HPA" id="ENSG00000121440">
    <property type="expression patterns" value="Low tissue specificity"/>
</dbReference>
<dbReference type="MalaCards" id="PDZRN3"/>
<dbReference type="MIM" id="609729">
    <property type="type" value="gene"/>
</dbReference>
<dbReference type="neXtProt" id="NX_Q9UPQ7"/>
<dbReference type="OpenTargets" id="ENSG00000121440"/>
<dbReference type="PharmGKB" id="PA134931098"/>
<dbReference type="VEuPathDB" id="HostDB:ENSG00000121440"/>
<dbReference type="eggNOG" id="KOG0297">
    <property type="taxonomic scope" value="Eukaryota"/>
</dbReference>
<dbReference type="eggNOG" id="KOG0312">
    <property type="taxonomic scope" value="Eukaryota"/>
</dbReference>
<dbReference type="GeneTree" id="ENSGT00950000183062"/>
<dbReference type="HOGENOM" id="CLU_058306_0_0_1"/>
<dbReference type="InParanoid" id="Q9UPQ7"/>
<dbReference type="OMA" id="HAGCGQL"/>
<dbReference type="OrthoDB" id="6270329at2759"/>
<dbReference type="PAN-GO" id="Q9UPQ7">
    <property type="GO annotations" value="4 GO annotations based on evolutionary models"/>
</dbReference>
<dbReference type="PhylomeDB" id="Q9UPQ7"/>
<dbReference type="TreeFam" id="TF315909"/>
<dbReference type="PathwayCommons" id="Q9UPQ7"/>
<dbReference type="SignaLink" id="Q9UPQ7"/>
<dbReference type="SIGNOR" id="Q9UPQ7"/>
<dbReference type="UniPathway" id="UPA00143"/>
<dbReference type="BioGRID-ORCS" id="23024">
    <property type="hits" value="10 hits in 1184 CRISPR screens"/>
</dbReference>
<dbReference type="ChiTaRS" id="PDZRN3">
    <property type="organism name" value="human"/>
</dbReference>
<dbReference type="EvolutionaryTrace" id="Q9UPQ7"/>
<dbReference type="GeneWiki" id="PDZRN3"/>
<dbReference type="GenomeRNAi" id="23024"/>
<dbReference type="Pharos" id="Q9UPQ7">
    <property type="development level" value="Tbio"/>
</dbReference>
<dbReference type="PRO" id="PR:Q9UPQ7"/>
<dbReference type="Proteomes" id="UP000005640">
    <property type="component" value="Chromosome 3"/>
</dbReference>
<dbReference type="RNAct" id="Q9UPQ7">
    <property type="molecule type" value="protein"/>
</dbReference>
<dbReference type="Bgee" id="ENSG00000121440">
    <property type="expression patterns" value="Expressed in blood vessel layer and 198 other cell types or tissues"/>
</dbReference>
<dbReference type="ExpressionAtlas" id="Q9UPQ7">
    <property type="expression patterns" value="baseline and differential"/>
</dbReference>
<dbReference type="GO" id="GO:0005737">
    <property type="term" value="C:cytoplasm"/>
    <property type="evidence" value="ECO:0007669"/>
    <property type="project" value="UniProtKB-SubCell"/>
</dbReference>
<dbReference type="GO" id="GO:0031594">
    <property type="term" value="C:neuromuscular junction"/>
    <property type="evidence" value="ECO:0000318"/>
    <property type="project" value="GO_Central"/>
</dbReference>
<dbReference type="GO" id="GO:0061630">
    <property type="term" value="F:ubiquitin protein ligase activity"/>
    <property type="evidence" value="ECO:0000318"/>
    <property type="project" value="GO_Central"/>
</dbReference>
<dbReference type="GO" id="GO:0004842">
    <property type="term" value="F:ubiquitin-protein transferase activity"/>
    <property type="evidence" value="ECO:0000250"/>
    <property type="project" value="UniProtKB"/>
</dbReference>
<dbReference type="GO" id="GO:0008270">
    <property type="term" value="F:zinc ion binding"/>
    <property type="evidence" value="ECO:0007669"/>
    <property type="project" value="UniProtKB-KW"/>
</dbReference>
<dbReference type="GO" id="GO:0007528">
    <property type="term" value="P:neuromuscular junction development"/>
    <property type="evidence" value="ECO:0000318"/>
    <property type="project" value="GO_Central"/>
</dbReference>
<dbReference type="GO" id="GO:0016567">
    <property type="term" value="P:protein ubiquitination"/>
    <property type="evidence" value="ECO:0000250"/>
    <property type="project" value="UniProtKB"/>
</dbReference>
<dbReference type="CDD" id="cd06715">
    <property type="entry name" value="PDZ1-PDZRN4-like"/>
    <property type="match status" value="1"/>
</dbReference>
<dbReference type="CDD" id="cd06716">
    <property type="entry name" value="PDZ2-PDZRN4-like"/>
    <property type="match status" value="1"/>
</dbReference>
<dbReference type="CDD" id="cd16718">
    <property type="entry name" value="RING-HC_LNX3"/>
    <property type="match status" value="1"/>
</dbReference>
<dbReference type="FunFam" id="3.30.40.10:FF:000214">
    <property type="entry name" value="E3 ubiquitin-protein ligase PDZRN3 isoform X1"/>
    <property type="match status" value="1"/>
</dbReference>
<dbReference type="FunFam" id="3.30.40.10:FF:000445">
    <property type="entry name" value="E3 ubiquitin-protein ligase PDZRN3 isoform X1"/>
    <property type="match status" value="1"/>
</dbReference>
<dbReference type="FunFam" id="2.30.42.10:FF:000028">
    <property type="entry name" value="PDZ domain containing ring finger 4"/>
    <property type="match status" value="1"/>
</dbReference>
<dbReference type="FunFam" id="2.30.42.10:FF:000133">
    <property type="entry name" value="PDZ domain containing ring finger 4"/>
    <property type="match status" value="1"/>
</dbReference>
<dbReference type="Gene3D" id="2.30.42.10">
    <property type="match status" value="2"/>
</dbReference>
<dbReference type="Gene3D" id="3.30.40.10">
    <property type="entry name" value="Zinc/RING finger domain, C3HC4 (zinc finger)"/>
    <property type="match status" value="2"/>
</dbReference>
<dbReference type="InterPro" id="IPR051971">
    <property type="entry name" value="E3_ubiquitin-PDZ_ligase"/>
</dbReference>
<dbReference type="InterPro" id="IPR001478">
    <property type="entry name" value="PDZ"/>
</dbReference>
<dbReference type="InterPro" id="IPR036034">
    <property type="entry name" value="PDZ_sf"/>
</dbReference>
<dbReference type="InterPro" id="IPR001841">
    <property type="entry name" value="Znf_RING"/>
</dbReference>
<dbReference type="InterPro" id="IPR013083">
    <property type="entry name" value="Znf_RING/FYVE/PHD"/>
</dbReference>
<dbReference type="InterPro" id="IPR017907">
    <property type="entry name" value="Znf_RING_CS"/>
</dbReference>
<dbReference type="InterPro" id="IPR001293">
    <property type="entry name" value="Znf_TRAF"/>
</dbReference>
<dbReference type="PANTHER" id="PTHR15545:SF5">
    <property type="entry name" value="E3 UBIQUITIN-PROTEIN LIGASE PDZRN3"/>
    <property type="match status" value="1"/>
</dbReference>
<dbReference type="PANTHER" id="PTHR15545">
    <property type="entry name" value="PDZ DOMAIN CONTAINING RING FINGER PROTEIN 3, 4"/>
    <property type="match status" value="1"/>
</dbReference>
<dbReference type="Pfam" id="PF00595">
    <property type="entry name" value="PDZ"/>
    <property type="match status" value="2"/>
</dbReference>
<dbReference type="Pfam" id="PF13923">
    <property type="entry name" value="zf-C3HC4_2"/>
    <property type="match status" value="1"/>
</dbReference>
<dbReference type="SMART" id="SM00228">
    <property type="entry name" value="PDZ"/>
    <property type="match status" value="2"/>
</dbReference>
<dbReference type="SMART" id="SM00184">
    <property type="entry name" value="RING"/>
    <property type="match status" value="1"/>
</dbReference>
<dbReference type="SUPFAM" id="SSF50156">
    <property type="entry name" value="PDZ domain-like"/>
    <property type="match status" value="2"/>
</dbReference>
<dbReference type="SUPFAM" id="SSF57850">
    <property type="entry name" value="RING/U-box"/>
    <property type="match status" value="1"/>
</dbReference>
<dbReference type="SUPFAM" id="SSF49599">
    <property type="entry name" value="TRAF domain-like"/>
    <property type="match status" value="1"/>
</dbReference>
<dbReference type="PROSITE" id="PS50106">
    <property type="entry name" value="PDZ"/>
    <property type="match status" value="2"/>
</dbReference>
<dbReference type="PROSITE" id="PS00518">
    <property type="entry name" value="ZF_RING_1"/>
    <property type="match status" value="1"/>
</dbReference>
<dbReference type="PROSITE" id="PS50089">
    <property type="entry name" value="ZF_RING_2"/>
    <property type="match status" value="1"/>
</dbReference>
<dbReference type="PROSITE" id="PS50145">
    <property type="entry name" value="ZF_TRAF"/>
    <property type="match status" value="1"/>
</dbReference>
<organism>
    <name type="scientific">Homo sapiens</name>
    <name type="common">Human</name>
    <dbReference type="NCBI Taxonomy" id="9606"/>
    <lineage>
        <taxon>Eukaryota</taxon>
        <taxon>Metazoa</taxon>
        <taxon>Chordata</taxon>
        <taxon>Craniata</taxon>
        <taxon>Vertebrata</taxon>
        <taxon>Euteleostomi</taxon>
        <taxon>Mammalia</taxon>
        <taxon>Eutheria</taxon>
        <taxon>Euarchontoglires</taxon>
        <taxon>Primates</taxon>
        <taxon>Haplorrhini</taxon>
        <taxon>Catarrhini</taxon>
        <taxon>Hominidae</taxon>
        <taxon>Homo</taxon>
    </lineage>
</organism>
<evidence type="ECO:0000250" key="1"/>
<evidence type="ECO:0000250" key="2">
    <source>
        <dbReference type="UniProtKB" id="E7FDW2"/>
    </source>
</evidence>
<evidence type="ECO:0000250" key="3">
    <source>
        <dbReference type="UniProtKB" id="Q69ZS0"/>
    </source>
</evidence>
<evidence type="ECO:0000255" key="4"/>
<evidence type="ECO:0000255" key="5">
    <source>
        <dbReference type="PROSITE-ProRule" id="PRU00143"/>
    </source>
</evidence>
<evidence type="ECO:0000255" key="6">
    <source>
        <dbReference type="PROSITE-ProRule" id="PRU00175"/>
    </source>
</evidence>
<evidence type="ECO:0000255" key="7">
    <source>
        <dbReference type="PROSITE-ProRule" id="PRU00207"/>
    </source>
</evidence>
<evidence type="ECO:0000256" key="8">
    <source>
        <dbReference type="SAM" id="MobiDB-lite"/>
    </source>
</evidence>
<evidence type="ECO:0000269" key="9">
    <source>
    </source>
</evidence>
<evidence type="ECO:0000269" key="10">
    <source>
    </source>
</evidence>
<evidence type="ECO:0000269" key="11">
    <source>
    </source>
</evidence>
<evidence type="ECO:0000269" key="12">
    <source>
    </source>
</evidence>
<evidence type="ECO:0000303" key="13">
    <source>
    </source>
</evidence>
<evidence type="ECO:0000303" key="14">
    <source>
    </source>
</evidence>
<evidence type="ECO:0000305" key="15"/>
<evidence type="ECO:0007829" key="16">
    <source>
        <dbReference type="PDB" id="1UHP"/>
    </source>
</evidence>
<evidence type="ECO:0007829" key="17">
    <source>
        <dbReference type="PDB" id="1WH1"/>
    </source>
</evidence>
<reference key="1">
    <citation type="journal article" date="1999" name="DNA Res.">
        <title>Prediction of the coding sequences of unidentified human genes. XIV. The complete sequences of 100 new cDNA clones from brain which code for large proteins in vitro.</title>
        <authorList>
            <person name="Kikuno R."/>
            <person name="Nagase T."/>
            <person name="Ishikawa K."/>
            <person name="Hirosawa M."/>
            <person name="Miyajima N."/>
            <person name="Tanaka A."/>
            <person name="Kotani H."/>
            <person name="Nomura N."/>
            <person name="Ohara O."/>
        </authorList>
    </citation>
    <scope>NUCLEOTIDE SEQUENCE [LARGE SCALE MRNA] (ISOFORM 1)</scope>
    <scope>TISSUE SPECIFICITY</scope>
    <source>
        <tissue>Brain</tissue>
    </source>
</reference>
<reference key="2">
    <citation type="journal article" date="2004" name="Genome Res.">
        <title>The status, quality, and expansion of the NIH full-length cDNA project: the Mammalian Gene Collection (MGC).</title>
        <authorList>
            <consortium name="The MGC Project Team"/>
        </authorList>
    </citation>
    <scope>NUCLEOTIDE SEQUENCE [LARGE SCALE MRNA] (ISOFORMS 1 AND 2)</scope>
    <source>
        <tissue>Skin</tissue>
    </source>
</reference>
<reference key="3">
    <citation type="journal article" date="2004" name="Nat. Genet.">
        <title>Complete sequencing and characterization of 21,243 full-length human cDNAs.</title>
        <authorList>
            <person name="Ota T."/>
            <person name="Suzuki Y."/>
            <person name="Nishikawa T."/>
            <person name="Otsuki T."/>
            <person name="Sugiyama T."/>
            <person name="Irie R."/>
            <person name="Wakamatsu A."/>
            <person name="Hayashi K."/>
            <person name="Sato H."/>
            <person name="Nagai K."/>
            <person name="Kimura K."/>
            <person name="Makita H."/>
            <person name="Sekine M."/>
            <person name="Obayashi M."/>
            <person name="Nishi T."/>
            <person name="Shibahara T."/>
            <person name="Tanaka T."/>
            <person name="Ishii S."/>
            <person name="Yamamoto J."/>
            <person name="Saito K."/>
            <person name="Kawai Y."/>
            <person name="Isono Y."/>
            <person name="Nakamura Y."/>
            <person name="Nagahari K."/>
            <person name="Murakami K."/>
            <person name="Yasuda T."/>
            <person name="Iwayanagi T."/>
            <person name="Wagatsuma M."/>
            <person name="Shiratori A."/>
            <person name="Sudo H."/>
            <person name="Hosoiri T."/>
            <person name="Kaku Y."/>
            <person name="Kodaira H."/>
            <person name="Kondo H."/>
            <person name="Sugawara M."/>
            <person name="Takahashi M."/>
            <person name="Kanda K."/>
            <person name="Yokoi T."/>
            <person name="Furuya T."/>
            <person name="Kikkawa E."/>
            <person name="Omura Y."/>
            <person name="Abe K."/>
            <person name="Kamihara K."/>
            <person name="Katsuta N."/>
            <person name="Sato K."/>
            <person name="Tanikawa M."/>
            <person name="Yamazaki M."/>
            <person name="Ninomiya K."/>
            <person name="Ishibashi T."/>
            <person name="Yamashita H."/>
            <person name="Murakawa K."/>
            <person name="Fujimori K."/>
            <person name="Tanai H."/>
            <person name="Kimata M."/>
            <person name="Watanabe M."/>
            <person name="Hiraoka S."/>
            <person name="Chiba Y."/>
            <person name="Ishida S."/>
            <person name="Ono Y."/>
            <person name="Takiguchi S."/>
            <person name="Watanabe S."/>
            <person name="Yosida M."/>
            <person name="Hotuta T."/>
            <person name="Kusano J."/>
            <person name="Kanehori K."/>
            <person name="Takahashi-Fujii A."/>
            <person name="Hara H."/>
            <person name="Tanase T.-O."/>
            <person name="Nomura Y."/>
            <person name="Togiya S."/>
            <person name="Komai F."/>
            <person name="Hara R."/>
            <person name="Takeuchi K."/>
            <person name="Arita M."/>
            <person name="Imose N."/>
            <person name="Musashino K."/>
            <person name="Yuuki H."/>
            <person name="Oshima A."/>
            <person name="Sasaki N."/>
            <person name="Aotsuka S."/>
            <person name="Yoshikawa Y."/>
            <person name="Matsunawa H."/>
            <person name="Ichihara T."/>
            <person name="Shiohata N."/>
            <person name="Sano S."/>
            <person name="Moriya S."/>
            <person name="Momiyama H."/>
            <person name="Satoh N."/>
            <person name="Takami S."/>
            <person name="Terashima Y."/>
            <person name="Suzuki O."/>
            <person name="Nakagawa S."/>
            <person name="Senoh A."/>
            <person name="Mizoguchi H."/>
            <person name="Goto Y."/>
            <person name="Shimizu F."/>
            <person name="Wakebe H."/>
            <person name="Hishigaki H."/>
            <person name="Watanabe T."/>
            <person name="Sugiyama A."/>
            <person name="Takemoto M."/>
            <person name="Kawakami B."/>
            <person name="Yamazaki M."/>
            <person name="Watanabe K."/>
            <person name="Kumagai A."/>
            <person name="Itakura S."/>
            <person name="Fukuzumi Y."/>
            <person name="Fujimori Y."/>
            <person name="Komiyama M."/>
            <person name="Tashiro H."/>
            <person name="Tanigami A."/>
            <person name="Fujiwara T."/>
            <person name="Ono T."/>
            <person name="Yamada K."/>
            <person name="Fujii Y."/>
            <person name="Ozaki K."/>
            <person name="Hirao M."/>
            <person name="Ohmori Y."/>
            <person name="Kawabata A."/>
            <person name="Hikiji T."/>
            <person name="Kobatake N."/>
            <person name="Inagaki H."/>
            <person name="Ikema Y."/>
            <person name="Okamoto S."/>
            <person name="Okitani R."/>
            <person name="Kawakami T."/>
            <person name="Noguchi S."/>
            <person name="Itoh T."/>
            <person name="Shigeta K."/>
            <person name="Senba T."/>
            <person name="Matsumura K."/>
            <person name="Nakajima Y."/>
            <person name="Mizuno T."/>
            <person name="Morinaga M."/>
            <person name="Sasaki M."/>
            <person name="Togashi T."/>
            <person name="Oyama M."/>
            <person name="Hata H."/>
            <person name="Watanabe M."/>
            <person name="Komatsu T."/>
            <person name="Mizushima-Sugano J."/>
            <person name="Satoh T."/>
            <person name="Shirai Y."/>
            <person name="Takahashi Y."/>
            <person name="Nakagawa K."/>
            <person name="Okumura K."/>
            <person name="Nagase T."/>
            <person name="Nomura N."/>
            <person name="Kikuchi H."/>
            <person name="Masuho Y."/>
            <person name="Yamashita R."/>
            <person name="Nakai K."/>
            <person name="Yada T."/>
            <person name="Nakamura Y."/>
            <person name="Ohara O."/>
            <person name="Isogai T."/>
            <person name="Sugano S."/>
        </authorList>
    </citation>
    <scope>NUCLEOTIDE SEQUENCE [LARGE SCALE MRNA] OF 405-729 (ISOFORM 3)</scope>
</reference>
<reference key="4">
    <citation type="journal article" date="2007" name="BMC Genomics">
        <title>The full-ORF clone resource of the German cDNA consortium.</title>
        <authorList>
            <person name="Bechtel S."/>
            <person name="Rosenfelder H."/>
            <person name="Duda A."/>
            <person name="Schmidt C.P."/>
            <person name="Ernst U."/>
            <person name="Wellenreuther R."/>
            <person name="Mehrle A."/>
            <person name="Schuster C."/>
            <person name="Bahr A."/>
            <person name="Bloecker H."/>
            <person name="Heubner D."/>
            <person name="Hoerlein A."/>
            <person name="Michel G."/>
            <person name="Wedler H."/>
            <person name="Koehrer K."/>
            <person name="Ottenwaelder B."/>
            <person name="Poustka A."/>
            <person name="Wiemann S."/>
            <person name="Schupp I."/>
        </authorList>
    </citation>
    <scope>NUCLEOTIDE SEQUENCE [LARGE SCALE MRNA] OF 587-1066 (ISOFORM 1)</scope>
    <scope>VARIANT VAL-783</scope>
    <source>
        <tissue>Testis</tissue>
    </source>
</reference>
<reference key="5">
    <citation type="journal article" date="2004" name="Int. J. Mol. Med.">
        <title>Identification and characterization of PDZRN3 and PDZRN4 genes in silico.</title>
        <authorList>
            <person name="Katoh M."/>
            <person name="Katoh M."/>
        </authorList>
    </citation>
    <scope>IDENTIFICATION</scope>
</reference>
<reference key="6">
    <citation type="journal article" date="2004" name="Int. J. Cancer">
        <title>Gene expression profiles in primary ovarian serous papillary tumors and normal ovarian epithelium: identification of candidate molecular markers for ovarian cancer diagnosis and therapy.</title>
        <authorList>
            <person name="Santin A.D."/>
            <person name="Zhan F."/>
            <person name="Bellone S."/>
            <person name="Palmieri M."/>
            <person name="Cane S."/>
            <person name="Bignotti E."/>
            <person name="Anfossi S."/>
            <person name="Gokden M."/>
            <person name="Dunn D."/>
            <person name="Roman J.J."/>
            <person name="O'Brien T.J."/>
            <person name="Tian E."/>
            <person name="Cannon M.J."/>
            <person name="Shaughnessy J. Jr."/>
            <person name="Pecorelli S."/>
        </authorList>
    </citation>
    <scope>TISSUE SPECIFICITY</scope>
</reference>
<reference key="7">
    <citation type="journal article" date="2006" name="J. Cell Sci.">
        <title>PDZRN3 (LNX3, SEMCAP3) is required for the differentiation of C2C12 myoblasts into myotubes.</title>
        <authorList>
            <person name="Ko J.A."/>
            <person name="Kimura Y."/>
            <person name="Matsuura K."/>
            <person name="Yamamoto H."/>
            <person name="Gondo T."/>
            <person name="Inui M."/>
        </authorList>
    </citation>
    <scope>TISSUE SPECIFICITY</scope>
</reference>
<reference key="8">
    <citation type="submission" date="2004-01" db="PDB data bank">
        <title>Solution structure of RSGI RUH-005, a PDZ domain in human cDNA, KIAA1095.</title>
        <authorList>
            <consortium name="RIKEN structural genomics initiative (RSGI)"/>
        </authorList>
    </citation>
    <scope>STRUCTURE BY NMR OF 271-377</scope>
</reference>
<reference key="9">
    <citation type="submission" date="2004-11" db="PDB data bank">
        <title>Solution structure of the fourth PDZ domain of KIAA1095 protein.</title>
        <authorList>
            <consortium name="RIKEN structural genomics initiative (RSGI)"/>
        </authorList>
    </citation>
    <scope>STRUCTURE BY NMR OF 404-515</scope>
</reference>
<proteinExistence type="evidence at protein level"/>
<comment type="function">
    <text evidence="3">E3 ubiquitin-protein ligase. Plays an important role in regulating the surface level of MUSK on myotubes. Mediates the ubiquitination of MUSK, promoting its endocytosis and lysosomal degradation. Might contribute to terminal myogenic differentiation.</text>
</comment>
<comment type="catalytic activity">
    <reaction>
        <text>S-ubiquitinyl-[E2 ubiquitin-conjugating enzyme]-L-cysteine + [acceptor protein]-L-lysine = [E2 ubiquitin-conjugating enzyme]-L-cysteine + N(6)-ubiquitinyl-[acceptor protein]-L-lysine.</text>
        <dbReference type="EC" id="2.3.2.27"/>
    </reaction>
</comment>
<comment type="pathway">
    <text>Protein modification; protein ubiquitination.</text>
</comment>
<comment type="subunit">
    <text evidence="1">Interacts with NLGN1 and EFNB2. Interacts with UBE2D2 and with MUSK via the first PDZ domain.</text>
</comment>
<comment type="subcellular location">
    <subcellularLocation>
        <location evidence="3">Synapse</location>
    </subcellularLocation>
    <subcellularLocation>
        <location evidence="2">Cytoplasm</location>
    </subcellularLocation>
    <text evidence="3">Localizes to the postsynaptic region of neuromuscular junctions.</text>
</comment>
<comment type="alternative products">
    <event type="alternative splicing"/>
    <isoform>
        <id>Q9UPQ7-1</id>
        <name>1</name>
        <sequence type="displayed"/>
    </isoform>
    <isoform>
        <id>Q9UPQ7-2</id>
        <name>2</name>
        <sequence type="described" ref="VSP_012606 VSP_012607"/>
    </isoform>
    <isoform>
        <id>Q9UPQ7-3</id>
        <name>3</name>
        <sequence type="described" ref="VSP_012608 VSP_012609"/>
    </isoform>
</comment>
<comment type="tissue specificity">
    <text evidence="9 10 11">Widely expressed, including in the heart, skeletal muscle and liver and, at lower levels, in the brain, colon, small intestine, placenta and lung. Down-regulated in ovarian serous papillary tumors.</text>
</comment>
<comment type="domain">
    <text evidence="1">The RING-type zinc finger domain is required for E3 ligase activity.</text>
</comment>
<comment type="PTM">
    <text evidence="1">Auto-ubiquitinated.</text>
</comment>
<comment type="sequence caution" evidence="15">
    <conflict type="erroneous initiation">
        <sequence resource="EMBL-CDS" id="BAA83047"/>
    </conflict>
</comment>
<comment type="sequence caution" evidence="15">
    <conflict type="erroneous initiation">
        <sequence resource="EMBL-CDS" id="BAC11068"/>
    </conflict>
</comment>
<sequence>MGFELDRFDGDVDPDLKCALCHKVLEDPLTTPCGHVFCAGCVLPWVVQEGSCPARCRGRLSAKELNHVLPLKRLILKLDIKCAYATRGCGRVVKLQQLPEHLERCDFAPARCRHAGCGQVLLRRDVEAHMRDACDARPVGRCQEGCGLPLTHGEQRAGGHCCARALRAHNGALQARLGALHKALKKEALRAGKREKSLVAQLAAAQLELQMTALRYQKKFTEYSARLDSLSRCVAAPPGGKGEETKSLTLVLHRDSGSLGFNIIGGRPSVDNHDGSSSEGIFVSKIVDSGPAAKEGGLQIHDRIIEVNGRDLSRATHDQAVEAFKTAKEPIVVQVLRRTPRTKMFTPPSESQLVDTGTQTDITFEHIMALTKMSSPSPPVLDPYLLPEEHPSAHEYYDPNDYIGDIHQEMDREELELEEVDLYRMNSQDKLGLTVCYRTDDEDDIGIYISEIDPNSIAAKDGRIREGDRIIQINGIEVQNREEAVALLTSEENKNFSLLIARPELQLDEGWMDDDRNDFLDDLHMDMLEEQHHQAMQFTASVLQQKKHDEDGGTTDTATILSNQHEKDSGVGRTDESTRNDESSEQENNGDDATASSNPLAGQRKLTCSQDTLGSGDLPFSNESFISADCTDADYLGIPVDECERFRELLELKCQVKSATPYGLYYPSGPLDAGKSDPESVDKELELLNEELRSIELECLSIVRAHKMQQLKEQYRESWMLHNSGFRNYNTSIDVRRHELSDITELPEKSDKDSSSAYNTGESCRSTPLTLEISPDNSLRRAAEGISCPSSEGAVGTTEAYGPASKNLLSITEDPEVGTPTYSPSLKELDPNQPLESKERRASDGSRSPTPSQKLGSAYLPSYHHSPYKHAHIPAHAQHYQSYMQLIQQKSAVEYAQSQMSLVSMCKDLSSPTPSEPRMEWKVKIRSDGTRYITKRPVRDRLLRERALKIREERSGMTTDDDAVSEMKMGRYWSKEERKQHLVKAKEQRRRREFMMQSRLDCLKEQQAADDRKEMNILELSHKKMMKKRNKKIFDNWMTIQELLTHGTKSPDGTRVYNSFLSVTTV</sequence>
<name>PZRN3_HUMAN</name>